<dbReference type="EC" id="7.1.1.-" evidence="1"/>
<dbReference type="EMBL" id="CP000611">
    <property type="protein sequence ID" value="ABQ74962.1"/>
    <property type="molecule type" value="Genomic_DNA"/>
</dbReference>
<dbReference type="RefSeq" id="WP_003416420.1">
    <property type="nucleotide sequence ID" value="NZ_CP016972.1"/>
</dbReference>
<dbReference type="SMR" id="A5U7G2"/>
<dbReference type="KEGG" id="mra:MRA_3179"/>
<dbReference type="eggNOG" id="COG0377">
    <property type="taxonomic scope" value="Bacteria"/>
</dbReference>
<dbReference type="HOGENOM" id="CLU_055737_7_3_11"/>
<dbReference type="Proteomes" id="UP000001988">
    <property type="component" value="Chromosome"/>
</dbReference>
<dbReference type="GO" id="GO:0005886">
    <property type="term" value="C:plasma membrane"/>
    <property type="evidence" value="ECO:0007669"/>
    <property type="project" value="UniProtKB-SubCell"/>
</dbReference>
<dbReference type="GO" id="GO:0045271">
    <property type="term" value="C:respiratory chain complex I"/>
    <property type="evidence" value="ECO:0007669"/>
    <property type="project" value="TreeGrafter"/>
</dbReference>
<dbReference type="GO" id="GO:0051539">
    <property type="term" value="F:4 iron, 4 sulfur cluster binding"/>
    <property type="evidence" value="ECO:0007669"/>
    <property type="project" value="UniProtKB-KW"/>
</dbReference>
<dbReference type="GO" id="GO:0005506">
    <property type="term" value="F:iron ion binding"/>
    <property type="evidence" value="ECO:0007669"/>
    <property type="project" value="UniProtKB-UniRule"/>
</dbReference>
<dbReference type="GO" id="GO:0008137">
    <property type="term" value="F:NADH dehydrogenase (ubiquinone) activity"/>
    <property type="evidence" value="ECO:0007669"/>
    <property type="project" value="InterPro"/>
</dbReference>
<dbReference type="GO" id="GO:0050136">
    <property type="term" value="F:NADH:ubiquinone reductase (non-electrogenic) activity"/>
    <property type="evidence" value="ECO:0007669"/>
    <property type="project" value="UniProtKB-UniRule"/>
</dbReference>
<dbReference type="GO" id="GO:0048038">
    <property type="term" value="F:quinone binding"/>
    <property type="evidence" value="ECO:0007669"/>
    <property type="project" value="UniProtKB-KW"/>
</dbReference>
<dbReference type="GO" id="GO:0009060">
    <property type="term" value="P:aerobic respiration"/>
    <property type="evidence" value="ECO:0007669"/>
    <property type="project" value="TreeGrafter"/>
</dbReference>
<dbReference type="GO" id="GO:0015990">
    <property type="term" value="P:electron transport coupled proton transport"/>
    <property type="evidence" value="ECO:0007669"/>
    <property type="project" value="TreeGrafter"/>
</dbReference>
<dbReference type="FunFam" id="3.40.50.12280:FF:000004">
    <property type="entry name" value="NADH-quinone oxidoreductase subunit B"/>
    <property type="match status" value="1"/>
</dbReference>
<dbReference type="Gene3D" id="3.40.50.12280">
    <property type="match status" value="1"/>
</dbReference>
<dbReference type="HAMAP" id="MF_01356">
    <property type="entry name" value="NDH1_NuoB"/>
    <property type="match status" value="1"/>
</dbReference>
<dbReference type="InterPro" id="IPR006137">
    <property type="entry name" value="NADH_UbQ_OxRdtase-like_20kDa"/>
</dbReference>
<dbReference type="InterPro" id="IPR006138">
    <property type="entry name" value="NADH_UQ_OxRdtase_20Kd_su"/>
</dbReference>
<dbReference type="NCBIfam" id="TIGR01957">
    <property type="entry name" value="nuoB_fam"/>
    <property type="match status" value="1"/>
</dbReference>
<dbReference type="NCBIfam" id="NF005012">
    <property type="entry name" value="PRK06411.1"/>
    <property type="match status" value="1"/>
</dbReference>
<dbReference type="PANTHER" id="PTHR11995">
    <property type="entry name" value="NADH DEHYDROGENASE"/>
    <property type="match status" value="1"/>
</dbReference>
<dbReference type="PANTHER" id="PTHR11995:SF14">
    <property type="entry name" value="NADH DEHYDROGENASE [UBIQUINONE] IRON-SULFUR PROTEIN 7, MITOCHONDRIAL"/>
    <property type="match status" value="1"/>
</dbReference>
<dbReference type="Pfam" id="PF01058">
    <property type="entry name" value="Oxidored_q6"/>
    <property type="match status" value="1"/>
</dbReference>
<dbReference type="SUPFAM" id="SSF56770">
    <property type="entry name" value="HydA/Nqo6-like"/>
    <property type="match status" value="1"/>
</dbReference>
<dbReference type="PROSITE" id="PS01150">
    <property type="entry name" value="COMPLEX1_20K"/>
    <property type="match status" value="1"/>
</dbReference>
<comment type="function">
    <text evidence="1">NDH-1 shuttles electrons from NADH, via FMN and iron-sulfur (Fe-S) centers, to quinones in the respiratory chain. The immediate electron acceptor for the enzyme in this species is believed to be a menaquinone. Couples the redox reaction to proton translocation (for every two electrons transferred, four hydrogen ions are translocated across the cytoplasmic membrane), and thus conserves the redox energy in a proton gradient.</text>
</comment>
<comment type="catalytic activity">
    <reaction evidence="1">
        <text>a quinone + NADH + 5 H(+)(in) = a quinol + NAD(+) + 4 H(+)(out)</text>
        <dbReference type="Rhea" id="RHEA:57888"/>
        <dbReference type="ChEBI" id="CHEBI:15378"/>
        <dbReference type="ChEBI" id="CHEBI:24646"/>
        <dbReference type="ChEBI" id="CHEBI:57540"/>
        <dbReference type="ChEBI" id="CHEBI:57945"/>
        <dbReference type="ChEBI" id="CHEBI:132124"/>
    </reaction>
</comment>
<comment type="cofactor">
    <cofactor evidence="1">
        <name>[4Fe-4S] cluster</name>
        <dbReference type="ChEBI" id="CHEBI:49883"/>
    </cofactor>
    <text evidence="1">Binds 1 [4Fe-4S] cluster.</text>
</comment>
<comment type="subunit">
    <text evidence="1">NDH-1 is composed of 14 different subunits. Subunits NuoB, C, D, E, F, and G constitute the peripheral sector of the complex.</text>
</comment>
<comment type="subcellular location">
    <subcellularLocation>
        <location evidence="1">Cell membrane</location>
        <topology evidence="1">Peripheral membrane protein</topology>
        <orientation evidence="1">Cytoplasmic side</orientation>
    </subcellularLocation>
</comment>
<comment type="similarity">
    <text evidence="1">Belongs to the complex I 20 kDa subunit family.</text>
</comment>
<evidence type="ECO:0000255" key="1">
    <source>
        <dbReference type="HAMAP-Rule" id="MF_01356"/>
    </source>
</evidence>
<sequence length="184" mass="20219">MGLEEQLPGGILLSTVEKVAGYVRKNSLWPATFGLACCAIEMMATAGPRFDIARFGMERFSATPRQADLMIVAGRVSQKMAPVLRQIYDQMAEPKWVLAMGVCASSGGMFNNYAIVQGVDHVVPVDIYLPGCPPRPEMLLHAILKLHEKIQQMPLGINRERAIAEAEEAALLARPTIEMRGLLR</sequence>
<organism>
    <name type="scientific">Mycobacterium tuberculosis (strain ATCC 25177 / H37Ra)</name>
    <dbReference type="NCBI Taxonomy" id="419947"/>
    <lineage>
        <taxon>Bacteria</taxon>
        <taxon>Bacillati</taxon>
        <taxon>Actinomycetota</taxon>
        <taxon>Actinomycetes</taxon>
        <taxon>Mycobacteriales</taxon>
        <taxon>Mycobacteriaceae</taxon>
        <taxon>Mycobacterium</taxon>
        <taxon>Mycobacterium tuberculosis complex</taxon>
    </lineage>
</organism>
<proteinExistence type="inferred from homology"/>
<accession>A5U7G2</accession>
<reference key="1">
    <citation type="journal article" date="2008" name="PLoS ONE">
        <title>Genetic basis of virulence attenuation revealed by comparative genomic analysis of Mycobacterium tuberculosis strain H37Ra versus H37Rv.</title>
        <authorList>
            <person name="Zheng H."/>
            <person name="Lu L."/>
            <person name="Wang B."/>
            <person name="Pu S."/>
            <person name="Zhang X."/>
            <person name="Zhu G."/>
            <person name="Shi W."/>
            <person name="Zhang L."/>
            <person name="Wang H."/>
            <person name="Wang S."/>
            <person name="Zhao G."/>
            <person name="Zhang Y."/>
        </authorList>
    </citation>
    <scope>NUCLEOTIDE SEQUENCE [LARGE SCALE GENOMIC DNA]</scope>
    <source>
        <strain>ATCC 25177 / H37Ra</strain>
    </source>
</reference>
<gene>
    <name evidence="1" type="primary">nuoB</name>
    <name type="ordered locus">MRA_3179</name>
</gene>
<protein>
    <recommendedName>
        <fullName evidence="1">NADH-quinone oxidoreductase subunit B</fullName>
        <ecNumber evidence="1">7.1.1.-</ecNumber>
    </recommendedName>
    <alternativeName>
        <fullName evidence="1">NADH dehydrogenase I subunit B</fullName>
    </alternativeName>
    <alternativeName>
        <fullName evidence="1">NDH-1 subunit B</fullName>
    </alternativeName>
</protein>
<keyword id="KW-0004">4Fe-4S</keyword>
<keyword id="KW-1003">Cell membrane</keyword>
<keyword id="KW-0408">Iron</keyword>
<keyword id="KW-0411">Iron-sulfur</keyword>
<keyword id="KW-0472">Membrane</keyword>
<keyword id="KW-0479">Metal-binding</keyword>
<keyword id="KW-0520">NAD</keyword>
<keyword id="KW-0874">Quinone</keyword>
<keyword id="KW-1185">Reference proteome</keyword>
<keyword id="KW-1278">Translocase</keyword>
<keyword id="KW-0813">Transport</keyword>
<name>NUOB_MYCTA</name>
<feature type="chain" id="PRO_0000376284" description="NADH-quinone oxidoreductase subunit B">
    <location>
        <begin position="1"/>
        <end position="184"/>
    </location>
</feature>
<feature type="binding site" evidence="1">
    <location>
        <position position="37"/>
    </location>
    <ligand>
        <name>[4Fe-4S] cluster</name>
        <dbReference type="ChEBI" id="CHEBI:49883"/>
    </ligand>
</feature>
<feature type="binding site" evidence="1">
    <location>
        <position position="38"/>
    </location>
    <ligand>
        <name>[4Fe-4S] cluster</name>
        <dbReference type="ChEBI" id="CHEBI:49883"/>
    </ligand>
</feature>
<feature type="binding site" evidence="1">
    <location>
        <position position="103"/>
    </location>
    <ligand>
        <name>[4Fe-4S] cluster</name>
        <dbReference type="ChEBI" id="CHEBI:49883"/>
    </ligand>
</feature>
<feature type="binding site" evidence="1">
    <location>
        <position position="132"/>
    </location>
    <ligand>
        <name>[4Fe-4S] cluster</name>
        <dbReference type="ChEBI" id="CHEBI:49883"/>
    </ligand>
</feature>